<sequence>MHWGLCPRGPGAAAVAAAGSFWGPARLPSRLGCLGMTRRLVVRSVAGADSPQSSSKGGRYRDTVLLPQTSFPMKLLGRQQSDMELEIQQKCGFSELYSWQRERKVKTEFCLHDGPPYANGDPHVGHALNKILKDIANRFHMMRGSKVHFVPGWDCHGLPIETKVLSELGVDAQSLSAMEIREKARSFAQAAIEKQKSAFVRWGVMADWNNCYYTFDPKYEAKQLRVFYQMYEKGLVYRSYKPVYWSPSSRTALAEAELEYNPEHVSRSIYVRFPLLRPPPKLESLTDASSPVSVLVWTTQPWTIPANQAICYMPEAKYAVVKCSASGHLYILAEDKIAPVASALETTFDVVAAFSGVDLEGGTCSHPLTPDKVSPLLPATHVTMAKGTGLVHTAPAHGMEDYSVASQHSLPMDCLVDEGGMFTDAAGPELQNKAVLKEGTDVVIKMLQATKNVLKEENIVHSYPCDWRTKTPVLIRASKQWFVNITDIKAAAKESLKTVKFIPGAALNSMTDMLDRRPYWCISRQRVWGVPIPVFHHKTKDEYLINSQTTEHIIKLVEQHGSDVWWTLPAEQLLPAEVLAQAGGPGALEYAPGQDILDIWFDSGTSWSCVLQDTQQRADLYLEGKDQLGGWFQSSLLTSVATRSKAPFRTVMVHGFTLGEKGEKMSKSLGNVINPDTIISGGKDHSKEPPYGADILRWWIAESNVFTEVTIGPSVLSAARDDISKLRNTLRFLLGNLTGFNPETDSVPVKNMYVIDQYMLHLIQDFATKITDSYKQYDFGKVVRLLKAFYTRELSSFYFSIVKDRLYCENEKDPKRRSCQTALAEILDVLVRAFAPILPHLAEEVFQHIPYVTEPKSVFRTGWINTSSIWKKPGLEEAVESACAMRDSFLGSIPGKNAAEYEVIIVIEPGLLFEIMEMLQAEETSSTSQLNELMMASQTTLLAQEPRERTAGDIELTGTFVINLEGGDIREESSYKVIVVPTAREKCPRCWKHTSETADALCPRCAEVIGAK</sequence>
<proteinExistence type="evidence at protein level"/>
<accession>Q8BIJ6</accession>
<accession>Q3TKT8</accession>
<accession>Q8BIJ0</accession>
<accession>Q8BIP3</accession>
<dbReference type="EC" id="6.1.1.5" evidence="1"/>
<dbReference type="EMBL" id="AK166832">
    <property type="protein sequence ID" value="BAE39055.1"/>
    <property type="molecule type" value="mRNA"/>
</dbReference>
<dbReference type="EMBL" id="AK036182">
    <property type="protein sequence ID" value="BAC29337.1"/>
    <property type="molecule type" value="mRNA"/>
</dbReference>
<dbReference type="EMBL" id="AK048653">
    <property type="protein sequence ID" value="BAC33410.1"/>
    <property type="molecule type" value="mRNA"/>
</dbReference>
<dbReference type="EMBL" id="AK050358">
    <property type="protein sequence ID" value="BAC34208.1"/>
    <property type="molecule type" value="mRNA"/>
</dbReference>
<dbReference type="EMBL" id="BC052403">
    <property type="protein sequence ID" value="AAH52403.1"/>
    <property type="molecule type" value="mRNA"/>
</dbReference>
<dbReference type="CCDS" id="CCDS15596.1"/>
<dbReference type="RefSeq" id="NP_941055.1">
    <property type="nucleotide sequence ID" value="NM_198653.3"/>
</dbReference>
<dbReference type="SMR" id="Q8BIJ6"/>
<dbReference type="BioGRID" id="237874">
    <property type="interactions" value="13"/>
</dbReference>
<dbReference type="FunCoup" id="Q8BIJ6">
    <property type="interactions" value="2487"/>
</dbReference>
<dbReference type="STRING" id="10090.ENSMUSP00000027921"/>
<dbReference type="GlyGen" id="Q8BIJ6">
    <property type="glycosylation" value="2 sites, 1 N-linked glycan (1 site), 1 O-linked glycan (1 site)"/>
</dbReference>
<dbReference type="iPTMnet" id="Q8BIJ6"/>
<dbReference type="PhosphoSitePlus" id="Q8BIJ6"/>
<dbReference type="SwissPalm" id="Q8BIJ6"/>
<dbReference type="jPOST" id="Q8BIJ6"/>
<dbReference type="PaxDb" id="10090-ENSMUSP00000027921"/>
<dbReference type="PeptideAtlas" id="Q8BIJ6"/>
<dbReference type="ProteomicsDB" id="253437"/>
<dbReference type="Pumba" id="Q8BIJ6"/>
<dbReference type="Antibodypedia" id="20735">
    <property type="antibodies" value="148 antibodies from 30 providers"/>
</dbReference>
<dbReference type="DNASU" id="381314"/>
<dbReference type="Ensembl" id="ENSMUST00000027921.11">
    <property type="protein sequence ID" value="ENSMUSP00000027921.5"/>
    <property type="gene ID" value="ENSMUSG00000026618.12"/>
</dbReference>
<dbReference type="GeneID" id="381314"/>
<dbReference type="KEGG" id="mmu:381314"/>
<dbReference type="UCSC" id="uc007dyz.1">
    <property type="organism name" value="mouse"/>
</dbReference>
<dbReference type="AGR" id="MGI:1919586"/>
<dbReference type="CTD" id="55699"/>
<dbReference type="MGI" id="MGI:1919586">
    <property type="gene designation" value="Iars2"/>
</dbReference>
<dbReference type="VEuPathDB" id="HostDB:ENSMUSG00000026618"/>
<dbReference type="eggNOG" id="KOG0433">
    <property type="taxonomic scope" value="Eukaryota"/>
</dbReference>
<dbReference type="GeneTree" id="ENSGT00550000074910"/>
<dbReference type="HOGENOM" id="CLU_001493_7_2_1"/>
<dbReference type="InParanoid" id="Q8BIJ6"/>
<dbReference type="OMA" id="HCWRCKT"/>
<dbReference type="OrthoDB" id="10264412at2759"/>
<dbReference type="PhylomeDB" id="Q8BIJ6"/>
<dbReference type="TreeFam" id="TF300518"/>
<dbReference type="Reactome" id="R-MMU-9837999">
    <property type="pathway name" value="Mitochondrial protein degradation"/>
</dbReference>
<dbReference type="BioGRID-ORCS" id="381314">
    <property type="hits" value="31 hits in 80 CRISPR screens"/>
</dbReference>
<dbReference type="ChiTaRS" id="Iars2">
    <property type="organism name" value="mouse"/>
</dbReference>
<dbReference type="PRO" id="PR:Q8BIJ6"/>
<dbReference type="Proteomes" id="UP000000589">
    <property type="component" value="Chromosome 1"/>
</dbReference>
<dbReference type="RNAct" id="Q8BIJ6">
    <property type="molecule type" value="protein"/>
</dbReference>
<dbReference type="Bgee" id="ENSMUSG00000026618">
    <property type="expression patterns" value="Expressed in migratory enteric neural crest cell and 271 other cell types or tissues"/>
</dbReference>
<dbReference type="ExpressionAtlas" id="Q8BIJ6">
    <property type="expression patterns" value="baseline and differential"/>
</dbReference>
<dbReference type="GO" id="GO:0005759">
    <property type="term" value="C:mitochondrial matrix"/>
    <property type="evidence" value="ECO:0007669"/>
    <property type="project" value="UniProtKB-SubCell"/>
</dbReference>
<dbReference type="GO" id="GO:0005739">
    <property type="term" value="C:mitochondrion"/>
    <property type="evidence" value="ECO:0007005"/>
    <property type="project" value="MGI"/>
</dbReference>
<dbReference type="GO" id="GO:0002161">
    <property type="term" value="F:aminoacyl-tRNA deacylase activity"/>
    <property type="evidence" value="ECO:0007669"/>
    <property type="project" value="InterPro"/>
</dbReference>
<dbReference type="GO" id="GO:0005524">
    <property type="term" value="F:ATP binding"/>
    <property type="evidence" value="ECO:0007669"/>
    <property type="project" value="UniProtKB-KW"/>
</dbReference>
<dbReference type="GO" id="GO:0004822">
    <property type="term" value="F:isoleucine-tRNA ligase activity"/>
    <property type="evidence" value="ECO:0007669"/>
    <property type="project" value="UniProtKB-EC"/>
</dbReference>
<dbReference type="GO" id="GO:0000049">
    <property type="term" value="F:tRNA binding"/>
    <property type="evidence" value="ECO:0007669"/>
    <property type="project" value="InterPro"/>
</dbReference>
<dbReference type="GO" id="GO:0006428">
    <property type="term" value="P:isoleucyl-tRNA aminoacylation"/>
    <property type="evidence" value="ECO:0007669"/>
    <property type="project" value="InterPro"/>
</dbReference>
<dbReference type="CDD" id="cd07960">
    <property type="entry name" value="Anticodon_Ia_Ile_BEm"/>
    <property type="match status" value="1"/>
</dbReference>
<dbReference type="FunFam" id="1.10.10.830:FF:000002">
    <property type="entry name" value="Isoleucine--tRNA ligase, mitochondrial"/>
    <property type="match status" value="1"/>
</dbReference>
<dbReference type="FunFam" id="1.10.730.20:FF:000002">
    <property type="entry name" value="isoleucine--tRNA ligase, mitochondrial"/>
    <property type="match status" value="1"/>
</dbReference>
<dbReference type="FunFam" id="3.40.50.620:FF:000137">
    <property type="entry name" value="Isoleucyl-tRNA synthetase 2, mitochondrial"/>
    <property type="match status" value="1"/>
</dbReference>
<dbReference type="FunFam" id="3.90.740.10:FF:000009">
    <property type="entry name" value="Isoleucyl-tRNA synthetase 2, mitochondrial"/>
    <property type="match status" value="1"/>
</dbReference>
<dbReference type="Gene3D" id="1.10.730.20">
    <property type="match status" value="1"/>
</dbReference>
<dbReference type="Gene3D" id="3.40.50.620">
    <property type="entry name" value="HUPs"/>
    <property type="match status" value="2"/>
</dbReference>
<dbReference type="Gene3D" id="1.10.10.830">
    <property type="entry name" value="Ile-tRNA synthetase CP2 domain-like"/>
    <property type="match status" value="1"/>
</dbReference>
<dbReference type="Gene3D" id="3.90.740.10">
    <property type="entry name" value="Valyl/Leucyl/Isoleucyl-tRNA synthetase, editing domain"/>
    <property type="match status" value="1"/>
</dbReference>
<dbReference type="HAMAP" id="MF_02002">
    <property type="entry name" value="Ile_tRNA_synth_type1"/>
    <property type="match status" value="1"/>
</dbReference>
<dbReference type="InterPro" id="IPR001412">
    <property type="entry name" value="aa-tRNA-synth_I_CS"/>
</dbReference>
<dbReference type="InterPro" id="IPR002300">
    <property type="entry name" value="aa-tRNA-synth_Ia"/>
</dbReference>
<dbReference type="InterPro" id="IPR033708">
    <property type="entry name" value="Anticodon_Ile_BEm"/>
</dbReference>
<dbReference type="InterPro" id="IPR002301">
    <property type="entry name" value="Ile-tRNA-ligase"/>
</dbReference>
<dbReference type="InterPro" id="IPR023585">
    <property type="entry name" value="Ile-tRNA-ligase_type1"/>
</dbReference>
<dbReference type="InterPro" id="IPR050081">
    <property type="entry name" value="Ile-tRNA_ligase"/>
</dbReference>
<dbReference type="InterPro" id="IPR013155">
    <property type="entry name" value="M/V/L/I-tRNA-synth_anticd-bd"/>
</dbReference>
<dbReference type="InterPro" id="IPR014729">
    <property type="entry name" value="Rossmann-like_a/b/a_fold"/>
</dbReference>
<dbReference type="InterPro" id="IPR009080">
    <property type="entry name" value="tRNAsynth_Ia_anticodon-bd"/>
</dbReference>
<dbReference type="InterPro" id="IPR009008">
    <property type="entry name" value="Val/Leu/Ile-tRNA-synth_edit"/>
</dbReference>
<dbReference type="InterPro" id="IPR010663">
    <property type="entry name" value="Znf_FPG/IleRS"/>
</dbReference>
<dbReference type="NCBIfam" id="TIGR00392">
    <property type="entry name" value="ileS"/>
    <property type="match status" value="1"/>
</dbReference>
<dbReference type="PANTHER" id="PTHR42765:SF1">
    <property type="entry name" value="ISOLEUCINE--TRNA LIGASE, MITOCHONDRIAL"/>
    <property type="match status" value="1"/>
</dbReference>
<dbReference type="PANTHER" id="PTHR42765">
    <property type="entry name" value="SOLEUCYL-TRNA SYNTHETASE"/>
    <property type="match status" value="1"/>
</dbReference>
<dbReference type="Pfam" id="PF08264">
    <property type="entry name" value="Anticodon_1"/>
    <property type="match status" value="1"/>
</dbReference>
<dbReference type="Pfam" id="PF00133">
    <property type="entry name" value="tRNA-synt_1"/>
    <property type="match status" value="1"/>
</dbReference>
<dbReference type="Pfam" id="PF06827">
    <property type="entry name" value="zf-FPG_IleRS"/>
    <property type="match status" value="1"/>
</dbReference>
<dbReference type="PRINTS" id="PR00984">
    <property type="entry name" value="TRNASYNTHILE"/>
</dbReference>
<dbReference type="SUPFAM" id="SSF47323">
    <property type="entry name" value="Anticodon-binding domain of a subclass of class I aminoacyl-tRNA synthetases"/>
    <property type="match status" value="1"/>
</dbReference>
<dbReference type="SUPFAM" id="SSF52374">
    <property type="entry name" value="Nucleotidylyl transferase"/>
    <property type="match status" value="1"/>
</dbReference>
<dbReference type="SUPFAM" id="SSF50677">
    <property type="entry name" value="ValRS/IleRS/LeuRS editing domain"/>
    <property type="match status" value="1"/>
</dbReference>
<dbReference type="PROSITE" id="PS00178">
    <property type="entry name" value="AA_TRNA_LIGASE_I"/>
    <property type="match status" value="1"/>
</dbReference>
<keyword id="KW-0007">Acetylation</keyword>
<keyword id="KW-0030">Aminoacyl-tRNA synthetase</keyword>
<keyword id="KW-0067">ATP-binding</keyword>
<keyword id="KW-0436">Ligase</keyword>
<keyword id="KW-0496">Mitochondrion</keyword>
<keyword id="KW-0547">Nucleotide-binding</keyword>
<keyword id="KW-0648">Protein biosynthesis</keyword>
<keyword id="KW-1185">Reference proteome</keyword>
<keyword id="KW-0809">Transit peptide</keyword>
<protein>
    <recommendedName>
        <fullName evidence="4">Isoleucine--tRNA ligase, mitochondrial</fullName>
        <ecNumber evidence="1">6.1.1.5</ecNumber>
    </recommendedName>
    <alternativeName>
        <fullName>Isoleucyl-tRNA synthetase</fullName>
        <shortName>IleRS</shortName>
    </alternativeName>
</protein>
<feature type="transit peptide" description="Mitochondrion" evidence="3">
    <location>
        <begin position="1"/>
        <end position="48"/>
    </location>
</feature>
<feature type="chain" id="PRO_0000233337" description="Isoleucine--tRNA ligase, mitochondrial">
    <location>
        <begin position="49"/>
        <end position="1012"/>
    </location>
</feature>
<feature type="short sequence motif" description="'HIGH' region" evidence="4">
    <location>
        <begin position="116"/>
        <end position="126"/>
    </location>
</feature>
<feature type="short sequence motif" description="'KMSKS' region" evidence="4">
    <location>
        <begin position="664"/>
        <end position="668"/>
    </location>
</feature>
<feature type="binding site" evidence="1">
    <location>
        <position position="664"/>
    </location>
    <ligand>
        <name>ATP</name>
        <dbReference type="ChEBI" id="CHEBI:30616"/>
    </ligand>
</feature>
<feature type="binding site" evidence="1">
    <location>
        <position position="667"/>
    </location>
    <ligand>
        <name>ATP</name>
        <dbReference type="ChEBI" id="CHEBI:30616"/>
    </ligand>
</feature>
<feature type="modified residue" description="N6-succinyllysine" evidence="7">
    <location>
        <position position="56"/>
    </location>
</feature>
<feature type="modified residue" description="N6-acetyllysine; alternate" evidence="6">
    <location>
        <position position="74"/>
    </location>
</feature>
<feature type="modified residue" description="N6-succinyllysine; alternate" evidence="7">
    <location>
        <position position="74"/>
    </location>
</feature>
<feature type="modified residue" description="N6-succinyllysine" evidence="7">
    <location>
        <position position="194"/>
    </location>
</feature>
<feature type="modified residue" description="N6-acetyllysine" evidence="2">
    <location>
        <position position="233"/>
    </location>
</feature>
<feature type="modified residue" description="N6-acetyllysine; alternate" evidence="2">
    <location>
        <position position="241"/>
    </location>
</feature>
<feature type="modified residue" description="N6-succinyllysine; alternate" evidence="7">
    <location>
        <position position="241"/>
    </location>
</feature>
<feature type="modified residue" description="N6-succinyllysine" evidence="7">
    <location>
        <position position="479"/>
    </location>
</feature>
<feature type="modified residue" description="N6-succinyllysine" evidence="7">
    <location>
        <position position="500"/>
    </location>
</feature>
<feature type="modified residue" description="N6-acetyllysine" evidence="6">
    <location>
        <position position="725"/>
    </location>
</feature>
<feature type="modified residue" description="N6-acetyllysine; alternate" evidence="6">
    <location>
        <position position="775"/>
    </location>
</feature>
<feature type="modified residue" description="N6-succinyllysine; alternate" evidence="7">
    <location>
        <position position="775"/>
    </location>
</feature>
<feature type="modified residue" description="N6-acetyllysine; alternate" evidence="2">
    <location>
        <position position="781"/>
    </location>
</feature>
<feature type="modified residue" description="N6-succinyllysine; alternate" evidence="7">
    <location>
        <position position="781"/>
    </location>
</feature>
<feature type="sequence conflict" description="In Ref. 1; BAC29337." evidence="4" ref="1">
    <original>Q</original>
    <variation>K</variation>
    <location>
        <position position="68"/>
    </location>
</feature>
<feature type="sequence conflict" description="In Ref. 1; BAE39055." evidence="4" ref="1">
    <original>E</original>
    <variation>G</variation>
    <location>
        <position position="86"/>
    </location>
</feature>
<feature type="sequence conflict" description="In Ref. 1; BAC29337." evidence="4" ref="1">
    <original>N</original>
    <variation>K</variation>
    <location>
        <position position="119"/>
    </location>
</feature>
<feature type="sequence conflict" description="In Ref. 1; BAC34208." evidence="4" ref="1">
    <original>V</original>
    <variation>M</variation>
    <location>
        <position position="709"/>
    </location>
</feature>
<feature type="sequence conflict" description="In Ref. 1; BAE39055." evidence="4" ref="1">
    <original>C</original>
    <variation>Y</variation>
    <location>
        <position position="819"/>
    </location>
</feature>
<organism>
    <name type="scientific">Mus musculus</name>
    <name type="common">Mouse</name>
    <dbReference type="NCBI Taxonomy" id="10090"/>
    <lineage>
        <taxon>Eukaryota</taxon>
        <taxon>Metazoa</taxon>
        <taxon>Chordata</taxon>
        <taxon>Craniata</taxon>
        <taxon>Vertebrata</taxon>
        <taxon>Euteleostomi</taxon>
        <taxon>Mammalia</taxon>
        <taxon>Eutheria</taxon>
        <taxon>Euarchontoglires</taxon>
        <taxon>Glires</taxon>
        <taxon>Rodentia</taxon>
        <taxon>Myomorpha</taxon>
        <taxon>Muroidea</taxon>
        <taxon>Muridae</taxon>
        <taxon>Murinae</taxon>
        <taxon>Mus</taxon>
        <taxon>Mus</taxon>
    </lineage>
</organism>
<reference key="1">
    <citation type="journal article" date="2005" name="Science">
        <title>The transcriptional landscape of the mammalian genome.</title>
        <authorList>
            <person name="Carninci P."/>
            <person name="Kasukawa T."/>
            <person name="Katayama S."/>
            <person name="Gough J."/>
            <person name="Frith M.C."/>
            <person name="Maeda N."/>
            <person name="Oyama R."/>
            <person name="Ravasi T."/>
            <person name="Lenhard B."/>
            <person name="Wells C."/>
            <person name="Kodzius R."/>
            <person name="Shimokawa K."/>
            <person name="Bajic V.B."/>
            <person name="Brenner S.E."/>
            <person name="Batalov S."/>
            <person name="Forrest A.R."/>
            <person name="Zavolan M."/>
            <person name="Davis M.J."/>
            <person name="Wilming L.G."/>
            <person name="Aidinis V."/>
            <person name="Allen J.E."/>
            <person name="Ambesi-Impiombato A."/>
            <person name="Apweiler R."/>
            <person name="Aturaliya R.N."/>
            <person name="Bailey T.L."/>
            <person name="Bansal M."/>
            <person name="Baxter L."/>
            <person name="Beisel K.W."/>
            <person name="Bersano T."/>
            <person name="Bono H."/>
            <person name="Chalk A.M."/>
            <person name="Chiu K.P."/>
            <person name="Choudhary V."/>
            <person name="Christoffels A."/>
            <person name="Clutterbuck D.R."/>
            <person name="Crowe M.L."/>
            <person name="Dalla E."/>
            <person name="Dalrymple B.P."/>
            <person name="de Bono B."/>
            <person name="Della Gatta G."/>
            <person name="di Bernardo D."/>
            <person name="Down T."/>
            <person name="Engstrom P."/>
            <person name="Fagiolini M."/>
            <person name="Faulkner G."/>
            <person name="Fletcher C.F."/>
            <person name="Fukushima T."/>
            <person name="Furuno M."/>
            <person name="Futaki S."/>
            <person name="Gariboldi M."/>
            <person name="Georgii-Hemming P."/>
            <person name="Gingeras T.R."/>
            <person name="Gojobori T."/>
            <person name="Green R.E."/>
            <person name="Gustincich S."/>
            <person name="Harbers M."/>
            <person name="Hayashi Y."/>
            <person name="Hensch T.K."/>
            <person name="Hirokawa N."/>
            <person name="Hill D."/>
            <person name="Huminiecki L."/>
            <person name="Iacono M."/>
            <person name="Ikeo K."/>
            <person name="Iwama A."/>
            <person name="Ishikawa T."/>
            <person name="Jakt M."/>
            <person name="Kanapin A."/>
            <person name="Katoh M."/>
            <person name="Kawasawa Y."/>
            <person name="Kelso J."/>
            <person name="Kitamura H."/>
            <person name="Kitano H."/>
            <person name="Kollias G."/>
            <person name="Krishnan S.P."/>
            <person name="Kruger A."/>
            <person name="Kummerfeld S.K."/>
            <person name="Kurochkin I.V."/>
            <person name="Lareau L.F."/>
            <person name="Lazarevic D."/>
            <person name="Lipovich L."/>
            <person name="Liu J."/>
            <person name="Liuni S."/>
            <person name="McWilliam S."/>
            <person name="Madan Babu M."/>
            <person name="Madera M."/>
            <person name="Marchionni L."/>
            <person name="Matsuda H."/>
            <person name="Matsuzawa S."/>
            <person name="Miki H."/>
            <person name="Mignone F."/>
            <person name="Miyake S."/>
            <person name="Morris K."/>
            <person name="Mottagui-Tabar S."/>
            <person name="Mulder N."/>
            <person name="Nakano N."/>
            <person name="Nakauchi H."/>
            <person name="Ng P."/>
            <person name="Nilsson R."/>
            <person name="Nishiguchi S."/>
            <person name="Nishikawa S."/>
            <person name="Nori F."/>
            <person name="Ohara O."/>
            <person name="Okazaki Y."/>
            <person name="Orlando V."/>
            <person name="Pang K.C."/>
            <person name="Pavan W.J."/>
            <person name="Pavesi G."/>
            <person name="Pesole G."/>
            <person name="Petrovsky N."/>
            <person name="Piazza S."/>
            <person name="Reed J."/>
            <person name="Reid J.F."/>
            <person name="Ring B.Z."/>
            <person name="Ringwald M."/>
            <person name="Rost B."/>
            <person name="Ruan Y."/>
            <person name="Salzberg S.L."/>
            <person name="Sandelin A."/>
            <person name="Schneider C."/>
            <person name="Schoenbach C."/>
            <person name="Sekiguchi K."/>
            <person name="Semple C.A."/>
            <person name="Seno S."/>
            <person name="Sessa L."/>
            <person name="Sheng Y."/>
            <person name="Shibata Y."/>
            <person name="Shimada H."/>
            <person name="Shimada K."/>
            <person name="Silva D."/>
            <person name="Sinclair B."/>
            <person name="Sperling S."/>
            <person name="Stupka E."/>
            <person name="Sugiura K."/>
            <person name="Sultana R."/>
            <person name="Takenaka Y."/>
            <person name="Taki K."/>
            <person name="Tammoja K."/>
            <person name="Tan S.L."/>
            <person name="Tang S."/>
            <person name="Taylor M.S."/>
            <person name="Tegner J."/>
            <person name="Teichmann S.A."/>
            <person name="Ueda H.R."/>
            <person name="van Nimwegen E."/>
            <person name="Verardo R."/>
            <person name="Wei C.L."/>
            <person name="Yagi K."/>
            <person name="Yamanishi H."/>
            <person name="Zabarovsky E."/>
            <person name="Zhu S."/>
            <person name="Zimmer A."/>
            <person name="Hide W."/>
            <person name="Bult C."/>
            <person name="Grimmond S.M."/>
            <person name="Teasdale R.D."/>
            <person name="Liu E.T."/>
            <person name="Brusic V."/>
            <person name="Quackenbush J."/>
            <person name="Wahlestedt C."/>
            <person name="Mattick J.S."/>
            <person name="Hume D.A."/>
            <person name="Kai C."/>
            <person name="Sasaki D."/>
            <person name="Tomaru Y."/>
            <person name="Fukuda S."/>
            <person name="Kanamori-Katayama M."/>
            <person name="Suzuki M."/>
            <person name="Aoki J."/>
            <person name="Arakawa T."/>
            <person name="Iida J."/>
            <person name="Imamura K."/>
            <person name="Itoh M."/>
            <person name="Kato T."/>
            <person name="Kawaji H."/>
            <person name="Kawagashira N."/>
            <person name="Kawashima T."/>
            <person name="Kojima M."/>
            <person name="Kondo S."/>
            <person name="Konno H."/>
            <person name="Nakano K."/>
            <person name="Ninomiya N."/>
            <person name="Nishio T."/>
            <person name="Okada M."/>
            <person name="Plessy C."/>
            <person name="Shibata K."/>
            <person name="Shiraki T."/>
            <person name="Suzuki S."/>
            <person name="Tagami M."/>
            <person name="Waki K."/>
            <person name="Watahiki A."/>
            <person name="Okamura-Oho Y."/>
            <person name="Suzuki H."/>
            <person name="Kawai J."/>
            <person name="Hayashizaki Y."/>
        </authorList>
    </citation>
    <scope>NUCLEOTIDE SEQUENCE [LARGE SCALE MRNA]</scope>
    <source>
        <strain>C57BL/6J</strain>
        <tissue>Cerebellum</tissue>
        <tissue>Head</tissue>
        <tissue>Liver</tissue>
    </source>
</reference>
<reference key="2">
    <citation type="journal article" date="2004" name="Genome Res.">
        <title>The status, quality, and expansion of the NIH full-length cDNA project: the Mammalian Gene Collection (MGC).</title>
        <authorList>
            <consortium name="The MGC Project Team"/>
        </authorList>
    </citation>
    <scope>NUCLEOTIDE SEQUENCE [LARGE SCALE MRNA]</scope>
    <source>
        <strain>C57BL/6J</strain>
    </source>
</reference>
<reference key="3">
    <citation type="journal article" date="2010" name="Cell">
        <title>A tissue-specific atlas of mouse protein phosphorylation and expression.</title>
        <authorList>
            <person name="Huttlin E.L."/>
            <person name="Jedrychowski M.P."/>
            <person name="Elias J.E."/>
            <person name="Goswami T."/>
            <person name="Rad R."/>
            <person name="Beausoleil S.A."/>
            <person name="Villen J."/>
            <person name="Haas W."/>
            <person name="Sowa M.E."/>
            <person name="Gygi S.P."/>
        </authorList>
    </citation>
    <scope>IDENTIFICATION BY MASS SPECTROMETRY [LARGE SCALE ANALYSIS]</scope>
    <source>
        <tissue>Brain</tissue>
        <tissue>Brown adipose tissue</tissue>
        <tissue>Heart</tissue>
        <tissue>Kidney</tissue>
        <tissue>Liver</tissue>
        <tissue>Lung</tissue>
        <tissue>Pancreas</tissue>
        <tissue>Spleen</tissue>
        <tissue>Testis</tissue>
    </source>
</reference>
<reference key="4">
    <citation type="journal article" date="2013" name="Mol. Cell">
        <title>SIRT5-mediated lysine desuccinylation impacts diverse metabolic pathways.</title>
        <authorList>
            <person name="Park J."/>
            <person name="Chen Y."/>
            <person name="Tishkoff D.X."/>
            <person name="Peng C."/>
            <person name="Tan M."/>
            <person name="Dai L."/>
            <person name="Xie Z."/>
            <person name="Zhang Y."/>
            <person name="Zwaans B.M."/>
            <person name="Skinner M.E."/>
            <person name="Lombard D.B."/>
            <person name="Zhao Y."/>
        </authorList>
    </citation>
    <scope>SUCCINYLATION [LARGE SCALE ANALYSIS] AT LYS-56; LYS-74; LYS-194; LYS-241; LYS-479; LYS-500; LYS-775 AND LYS-781</scope>
    <scope>IDENTIFICATION BY MASS SPECTROMETRY [LARGE SCALE ANALYSIS]</scope>
    <source>
        <tissue>Embryonic fibroblast</tissue>
        <tissue>Liver</tissue>
    </source>
</reference>
<reference key="5">
    <citation type="journal article" date="2013" name="Proc. Natl. Acad. Sci. U.S.A.">
        <title>Label-free quantitative proteomics of the lysine acetylome in mitochondria identifies substrates of SIRT3 in metabolic pathways.</title>
        <authorList>
            <person name="Rardin M.J."/>
            <person name="Newman J.C."/>
            <person name="Held J.M."/>
            <person name="Cusack M.P."/>
            <person name="Sorensen D.J."/>
            <person name="Li B."/>
            <person name="Schilling B."/>
            <person name="Mooney S.D."/>
            <person name="Kahn C.R."/>
            <person name="Verdin E."/>
            <person name="Gibson B.W."/>
        </authorList>
    </citation>
    <scope>ACETYLATION [LARGE SCALE ANALYSIS] AT LYS-74; LYS-725 AND LYS-775</scope>
    <scope>IDENTIFICATION BY MASS SPECTROMETRY [LARGE SCALE ANALYSIS]</scope>
    <source>
        <tissue>Liver</tissue>
    </source>
</reference>
<name>SYIM_MOUSE</name>
<gene>
    <name evidence="5" type="primary">Iars2</name>
</gene>
<evidence type="ECO:0000250" key="1">
    <source>
        <dbReference type="UniProtKB" id="P00956"/>
    </source>
</evidence>
<evidence type="ECO:0000250" key="2">
    <source>
        <dbReference type="UniProtKB" id="Q9NSE4"/>
    </source>
</evidence>
<evidence type="ECO:0000255" key="3"/>
<evidence type="ECO:0000305" key="4"/>
<evidence type="ECO:0000312" key="5">
    <source>
        <dbReference type="MGI" id="MGI:1919586"/>
    </source>
</evidence>
<evidence type="ECO:0007744" key="6">
    <source>
    </source>
</evidence>
<evidence type="ECO:0007744" key="7">
    <source>
    </source>
</evidence>
<comment type="function">
    <text evidence="1">Aminoacyl-tRNA synthetase that catalyzes the specific attachment of isoleucine to its cognate tRNA (tRNA(Ile)).</text>
</comment>
<comment type="catalytic activity">
    <reaction evidence="1">
        <text>tRNA(Ile) + L-isoleucine + ATP = L-isoleucyl-tRNA(Ile) + AMP + diphosphate</text>
        <dbReference type="Rhea" id="RHEA:11060"/>
        <dbReference type="Rhea" id="RHEA-COMP:9666"/>
        <dbReference type="Rhea" id="RHEA-COMP:9695"/>
        <dbReference type="ChEBI" id="CHEBI:30616"/>
        <dbReference type="ChEBI" id="CHEBI:33019"/>
        <dbReference type="ChEBI" id="CHEBI:58045"/>
        <dbReference type="ChEBI" id="CHEBI:78442"/>
        <dbReference type="ChEBI" id="CHEBI:78528"/>
        <dbReference type="ChEBI" id="CHEBI:456215"/>
        <dbReference type="EC" id="6.1.1.5"/>
    </reaction>
    <physiologicalReaction direction="left-to-right" evidence="4">
        <dbReference type="Rhea" id="RHEA:11061"/>
    </physiologicalReaction>
</comment>
<comment type="subcellular location">
    <subcellularLocation>
        <location evidence="4">Mitochondrion matrix</location>
    </subcellularLocation>
</comment>
<comment type="similarity">
    <text evidence="4">Belongs to the class-I aminoacyl-tRNA synthetase family.</text>
</comment>